<feature type="chain" id="PRO_0000100516" description="Phosphoribosylformylglycinamidine synthase subunit PurL">
    <location>
        <begin position="1"/>
        <end position="714"/>
    </location>
</feature>
<feature type="active site" evidence="1">
    <location>
        <position position="34"/>
    </location>
</feature>
<feature type="active site" description="Proton acceptor" evidence="1">
    <location>
        <position position="80"/>
    </location>
</feature>
<feature type="binding site" evidence="1">
    <location>
        <position position="37"/>
    </location>
    <ligand>
        <name>ATP</name>
        <dbReference type="ChEBI" id="CHEBI:30616"/>
    </ligand>
</feature>
<feature type="binding site" evidence="1">
    <location>
        <position position="78"/>
    </location>
    <ligand>
        <name>Mg(2+)</name>
        <dbReference type="ChEBI" id="CHEBI:18420"/>
        <label>1</label>
    </ligand>
</feature>
<feature type="binding site" evidence="1">
    <location>
        <begin position="79"/>
        <end position="82"/>
    </location>
    <ligand>
        <name>substrate</name>
    </ligand>
</feature>
<feature type="binding site" evidence="1">
    <location>
        <position position="101"/>
    </location>
    <ligand>
        <name>substrate</name>
    </ligand>
</feature>
<feature type="binding site" evidence="1">
    <location>
        <position position="102"/>
    </location>
    <ligand>
        <name>Mg(2+)</name>
        <dbReference type="ChEBI" id="CHEBI:18420"/>
        <label>2</label>
    </ligand>
</feature>
<feature type="binding site" evidence="1">
    <location>
        <position position="226"/>
    </location>
    <ligand>
        <name>substrate</name>
    </ligand>
</feature>
<feature type="binding site" evidence="1">
    <location>
        <position position="254"/>
    </location>
    <ligand>
        <name>Mg(2+)</name>
        <dbReference type="ChEBI" id="CHEBI:18420"/>
        <label>2</label>
    </ligand>
</feature>
<feature type="binding site" evidence="1">
    <location>
        <begin position="298"/>
        <end position="300"/>
    </location>
    <ligand>
        <name>substrate</name>
    </ligand>
</feature>
<feature type="binding site" evidence="1">
    <location>
        <position position="474"/>
    </location>
    <ligand>
        <name>ATP</name>
        <dbReference type="ChEBI" id="CHEBI:30616"/>
    </ligand>
</feature>
<feature type="binding site" evidence="1">
    <location>
        <position position="511"/>
    </location>
    <ligand>
        <name>ATP</name>
        <dbReference type="ChEBI" id="CHEBI:30616"/>
    </ligand>
</feature>
<feature type="binding site" evidence="1">
    <location>
        <position position="512"/>
    </location>
    <ligand>
        <name>Mg(2+)</name>
        <dbReference type="ChEBI" id="CHEBI:18420"/>
        <label>1</label>
    </ligand>
</feature>
<feature type="binding site" evidence="1">
    <location>
        <position position="514"/>
    </location>
    <ligand>
        <name>substrate</name>
    </ligand>
</feature>
<name>PURL_METTH</name>
<gene>
    <name evidence="1" type="primary">purL</name>
    <name type="ordered locus">MTH_1374</name>
</gene>
<keyword id="KW-0067">ATP-binding</keyword>
<keyword id="KW-0963">Cytoplasm</keyword>
<keyword id="KW-0436">Ligase</keyword>
<keyword id="KW-0460">Magnesium</keyword>
<keyword id="KW-0479">Metal-binding</keyword>
<keyword id="KW-0547">Nucleotide-binding</keyword>
<keyword id="KW-0658">Purine biosynthesis</keyword>
<keyword id="KW-1185">Reference proteome</keyword>
<sequence>MVLTDSEMEFIRKELGRDPNPLEYGMLDVMFSEHCSYKSSRPVLGLFPTEGEDVIIGPGDDAGVVEITDELALVIGIESHNHPSAIEPYGGAGTGIGGILRDIISMGAMPVALLDSLRFGYLEDQKSRYLFEHVVRGISDYGNRVGVPTVAGEVEFDENFQLNPLVNVMCAGLVPKNDIKRGIAPRPGDVFLLMGGRTGRDGIHGVTFASEELTSSSELEDRPAVQVGDPFTKKMVMEASFEIMDEIEVSGVKDLGGGGLTCCISELVAKCDNGARVSLEAIPLREEGMTPYEIMLSESQERMIFVMAPDDVEAAMEICRKYELPAAVIGEVTDTGRMIVESEGEVIADLPAKLLADPPVVEREARKPQLPEGQVEVKHPPLKDTLLKLISSPNIASKRWVYRQYDHEVQIRTVVKPGDDAAVLRVDGTTGVALTVDCNSIHTKLDPYGGGAASVGEAIRNVVSMGAWPVCIVDCLNFGNPEKPEVFWQFRECVRGMADMAETFSTPVISGNVSFYNETEGVTVNPSPVVGVAGKLSLDSIKTLDFKDEGEEIVVIGETGPELGASEYLRTVHGIVDGKPPETDLKAEFEAAKAVKEIIDGSGNKVTAVHDCSAGGIAVAVAEMAIKSGIGARIDPMKIPGRFRNIHEALFSESNGRYIMTVRGSARDILGGLDVPWAVIGTTGGRTLEFGDVALDISELDDAYHGVIEAYMST</sequence>
<organism>
    <name type="scientific">Methanothermobacter thermautotrophicus (strain ATCC 29096 / DSM 1053 / JCM 10044 / NBRC 100330 / Delta H)</name>
    <name type="common">Methanobacterium thermoautotrophicum</name>
    <dbReference type="NCBI Taxonomy" id="187420"/>
    <lineage>
        <taxon>Archaea</taxon>
        <taxon>Methanobacteriati</taxon>
        <taxon>Methanobacteriota</taxon>
        <taxon>Methanomada group</taxon>
        <taxon>Methanobacteria</taxon>
        <taxon>Methanobacteriales</taxon>
        <taxon>Methanobacteriaceae</taxon>
        <taxon>Methanothermobacter</taxon>
    </lineage>
</organism>
<proteinExistence type="inferred from homology"/>
<reference key="1">
    <citation type="journal article" date="1997" name="J. Bacteriol.">
        <title>Complete genome sequence of Methanobacterium thermoautotrophicum deltaH: functional analysis and comparative genomics.</title>
        <authorList>
            <person name="Smith D.R."/>
            <person name="Doucette-Stamm L.A."/>
            <person name="Deloughery C."/>
            <person name="Lee H.-M."/>
            <person name="Dubois J."/>
            <person name="Aldredge T."/>
            <person name="Bashirzadeh R."/>
            <person name="Blakely D."/>
            <person name="Cook R."/>
            <person name="Gilbert K."/>
            <person name="Harrison D."/>
            <person name="Hoang L."/>
            <person name="Keagle P."/>
            <person name="Lumm W."/>
            <person name="Pothier B."/>
            <person name="Qiu D."/>
            <person name="Spadafora R."/>
            <person name="Vicare R."/>
            <person name="Wang Y."/>
            <person name="Wierzbowski J."/>
            <person name="Gibson R."/>
            <person name="Jiwani N."/>
            <person name="Caruso A."/>
            <person name="Bush D."/>
            <person name="Safer H."/>
            <person name="Patwell D."/>
            <person name="Prabhakar S."/>
            <person name="McDougall S."/>
            <person name="Shimer G."/>
            <person name="Goyal A."/>
            <person name="Pietrovski S."/>
            <person name="Church G.M."/>
            <person name="Daniels C.J."/>
            <person name="Mao J.-I."/>
            <person name="Rice P."/>
            <person name="Noelling J."/>
            <person name="Reeve J.N."/>
        </authorList>
    </citation>
    <scope>NUCLEOTIDE SEQUENCE [LARGE SCALE GENOMIC DNA]</scope>
    <source>
        <strain>ATCC 29096 / DSM 1053 / JCM 10044 / NBRC 100330 / Delta H</strain>
    </source>
</reference>
<accession>O27427</accession>
<protein>
    <recommendedName>
        <fullName evidence="1">Phosphoribosylformylglycinamidine synthase subunit PurL</fullName>
        <shortName evidence="1">FGAM synthase</shortName>
        <ecNumber evidence="1">6.3.5.3</ecNumber>
    </recommendedName>
    <alternativeName>
        <fullName evidence="1">Formylglycinamide ribonucleotide amidotransferase subunit II</fullName>
        <shortName evidence="1">FGAR amidotransferase II</shortName>
        <shortName evidence="1">FGAR-AT II</shortName>
    </alternativeName>
    <alternativeName>
        <fullName evidence="1">Glutamine amidotransferase PurL</fullName>
    </alternativeName>
    <alternativeName>
        <fullName evidence="1">Phosphoribosylformylglycinamidine synthase subunit II</fullName>
    </alternativeName>
</protein>
<dbReference type="EC" id="6.3.5.3" evidence="1"/>
<dbReference type="EMBL" id="AE000666">
    <property type="protein sequence ID" value="AAB85851.1"/>
    <property type="molecule type" value="Genomic_DNA"/>
</dbReference>
<dbReference type="PIR" id="G69049">
    <property type="entry name" value="G69049"/>
</dbReference>
<dbReference type="RefSeq" id="WP_010876986.1">
    <property type="nucleotide sequence ID" value="NC_000916.1"/>
</dbReference>
<dbReference type="SMR" id="O27427"/>
<dbReference type="FunCoup" id="O27427">
    <property type="interactions" value="216"/>
</dbReference>
<dbReference type="STRING" id="187420.MTH_1374"/>
<dbReference type="PaxDb" id="187420-MTH_1374"/>
<dbReference type="EnsemblBacteria" id="AAB85851">
    <property type="protein sequence ID" value="AAB85851"/>
    <property type="gene ID" value="MTH_1374"/>
</dbReference>
<dbReference type="GeneID" id="82297812"/>
<dbReference type="KEGG" id="mth:MTH_1374"/>
<dbReference type="PATRIC" id="fig|187420.15.peg.1339"/>
<dbReference type="HOGENOM" id="CLU_003100_0_1_2"/>
<dbReference type="InParanoid" id="O27427"/>
<dbReference type="UniPathway" id="UPA00074">
    <property type="reaction ID" value="UER00128"/>
</dbReference>
<dbReference type="Proteomes" id="UP000005223">
    <property type="component" value="Chromosome"/>
</dbReference>
<dbReference type="GO" id="GO:0005737">
    <property type="term" value="C:cytoplasm"/>
    <property type="evidence" value="ECO:0007669"/>
    <property type="project" value="UniProtKB-SubCell"/>
</dbReference>
<dbReference type="GO" id="GO:0005524">
    <property type="term" value="F:ATP binding"/>
    <property type="evidence" value="ECO:0007669"/>
    <property type="project" value="UniProtKB-UniRule"/>
</dbReference>
<dbReference type="GO" id="GO:0000287">
    <property type="term" value="F:magnesium ion binding"/>
    <property type="evidence" value="ECO:0007669"/>
    <property type="project" value="UniProtKB-UniRule"/>
</dbReference>
<dbReference type="GO" id="GO:0004642">
    <property type="term" value="F:phosphoribosylformylglycinamidine synthase activity"/>
    <property type="evidence" value="ECO:0007669"/>
    <property type="project" value="UniProtKB-UniRule"/>
</dbReference>
<dbReference type="GO" id="GO:0006189">
    <property type="term" value="P:'de novo' IMP biosynthetic process"/>
    <property type="evidence" value="ECO:0007669"/>
    <property type="project" value="UniProtKB-UniRule"/>
</dbReference>
<dbReference type="CDD" id="cd02203">
    <property type="entry name" value="PurL_repeat1"/>
    <property type="match status" value="1"/>
</dbReference>
<dbReference type="CDD" id="cd02204">
    <property type="entry name" value="PurL_repeat2"/>
    <property type="match status" value="1"/>
</dbReference>
<dbReference type="FunFam" id="3.30.1330.10:FF:000004">
    <property type="entry name" value="Phosphoribosylformylglycinamidine synthase subunit PurL"/>
    <property type="match status" value="1"/>
</dbReference>
<dbReference type="Gene3D" id="3.90.650.10">
    <property type="entry name" value="PurM-like C-terminal domain"/>
    <property type="match status" value="2"/>
</dbReference>
<dbReference type="Gene3D" id="3.30.1330.10">
    <property type="entry name" value="PurM-like, N-terminal domain"/>
    <property type="match status" value="2"/>
</dbReference>
<dbReference type="HAMAP" id="MF_00420">
    <property type="entry name" value="PurL_2"/>
    <property type="match status" value="1"/>
</dbReference>
<dbReference type="InterPro" id="IPR010074">
    <property type="entry name" value="PRibForGlyAmidine_synth_PurL"/>
</dbReference>
<dbReference type="InterPro" id="IPR041609">
    <property type="entry name" value="PurL_linker"/>
</dbReference>
<dbReference type="InterPro" id="IPR010918">
    <property type="entry name" value="PurM-like_C_dom"/>
</dbReference>
<dbReference type="InterPro" id="IPR036676">
    <property type="entry name" value="PurM-like_C_sf"/>
</dbReference>
<dbReference type="InterPro" id="IPR016188">
    <property type="entry name" value="PurM-like_N"/>
</dbReference>
<dbReference type="InterPro" id="IPR036921">
    <property type="entry name" value="PurM-like_N_sf"/>
</dbReference>
<dbReference type="NCBIfam" id="TIGR01736">
    <property type="entry name" value="FGAM_synth_II"/>
    <property type="match status" value="1"/>
</dbReference>
<dbReference type="NCBIfam" id="NF002290">
    <property type="entry name" value="PRK01213.1"/>
    <property type="match status" value="1"/>
</dbReference>
<dbReference type="PANTHER" id="PTHR43555">
    <property type="entry name" value="PHOSPHORIBOSYLFORMYLGLYCINAMIDINE SYNTHASE SUBUNIT PURL"/>
    <property type="match status" value="1"/>
</dbReference>
<dbReference type="PANTHER" id="PTHR43555:SF1">
    <property type="entry name" value="PHOSPHORIBOSYLFORMYLGLYCINAMIDINE SYNTHASE SUBUNIT PURL"/>
    <property type="match status" value="1"/>
</dbReference>
<dbReference type="Pfam" id="PF00586">
    <property type="entry name" value="AIRS"/>
    <property type="match status" value="2"/>
</dbReference>
<dbReference type="Pfam" id="PF02769">
    <property type="entry name" value="AIRS_C"/>
    <property type="match status" value="2"/>
</dbReference>
<dbReference type="Pfam" id="PF18072">
    <property type="entry name" value="FGAR-AT_linker"/>
    <property type="match status" value="1"/>
</dbReference>
<dbReference type="PIRSF" id="PIRSF001587">
    <property type="entry name" value="FGAM_synthase_II"/>
    <property type="match status" value="1"/>
</dbReference>
<dbReference type="SUPFAM" id="SSF56042">
    <property type="entry name" value="PurM C-terminal domain-like"/>
    <property type="match status" value="2"/>
</dbReference>
<dbReference type="SUPFAM" id="SSF55326">
    <property type="entry name" value="PurM N-terminal domain-like"/>
    <property type="match status" value="2"/>
</dbReference>
<comment type="function">
    <text evidence="1">Part of the phosphoribosylformylglycinamidine synthase complex involved in the purines biosynthetic pathway. Catalyzes the ATP-dependent conversion of formylglycinamide ribonucleotide (FGAR) and glutamine to yield formylglycinamidine ribonucleotide (FGAM) and glutamate. The FGAM synthase complex is composed of three subunits. PurQ produces an ammonia molecule by converting glutamine to glutamate. PurL transfers the ammonia molecule to FGAR to form FGAM in an ATP-dependent manner. PurS interacts with PurQ and PurL and is thought to assist in the transfer of the ammonia molecule from PurQ to PurL.</text>
</comment>
<comment type="catalytic activity">
    <reaction evidence="1">
        <text>N(2)-formyl-N(1)-(5-phospho-beta-D-ribosyl)glycinamide + L-glutamine + ATP + H2O = 2-formamido-N(1)-(5-O-phospho-beta-D-ribosyl)acetamidine + L-glutamate + ADP + phosphate + H(+)</text>
        <dbReference type="Rhea" id="RHEA:17129"/>
        <dbReference type="ChEBI" id="CHEBI:15377"/>
        <dbReference type="ChEBI" id="CHEBI:15378"/>
        <dbReference type="ChEBI" id="CHEBI:29985"/>
        <dbReference type="ChEBI" id="CHEBI:30616"/>
        <dbReference type="ChEBI" id="CHEBI:43474"/>
        <dbReference type="ChEBI" id="CHEBI:58359"/>
        <dbReference type="ChEBI" id="CHEBI:147286"/>
        <dbReference type="ChEBI" id="CHEBI:147287"/>
        <dbReference type="ChEBI" id="CHEBI:456216"/>
        <dbReference type="EC" id="6.3.5.3"/>
    </reaction>
</comment>
<comment type="pathway">
    <text evidence="1">Purine metabolism; IMP biosynthesis via de novo pathway; 5-amino-1-(5-phospho-D-ribosyl)imidazole from N(2)-formyl-N(1)-(5-phospho-D-ribosyl)glycinamide: step 1/2.</text>
</comment>
<comment type="subunit">
    <text evidence="1">Monomer. Part of the FGAM synthase complex composed of 1 PurL, 1 PurQ and 2 PurS subunits.</text>
</comment>
<comment type="subcellular location">
    <subcellularLocation>
        <location evidence="1">Cytoplasm</location>
    </subcellularLocation>
</comment>
<comment type="similarity">
    <text evidence="1">Belongs to the FGAMS family.</text>
</comment>
<evidence type="ECO:0000255" key="1">
    <source>
        <dbReference type="HAMAP-Rule" id="MF_00420"/>
    </source>
</evidence>